<gene>
    <name evidence="1" type="primary">mtnN</name>
    <name type="ordered locus">CPS_4743</name>
</gene>
<keyword id="KW-0002">3D-structure</keyword>
<keyword id="KW-0028">Amino-acid biosynthesis</keyword>
<keyword id="KW-0378">Hydrolase</keyword>
<keyword id="KW-0486">Methionine biosynthesis</keyword>
<name>MTNN_COLP3</name>
<feature type="chain" id="PRO_0000359287" description="5'-methylthioadenosine/S-adenosylhomocysteine nucleosidase">
    <location>
        <begin position="1"/>
        <end position="243"/>
    </location>
</feature>
<feature type="active site" description="Proton acceptor" evidence="1">
    <location>
        <position position="12"/>
    </location>
</feature>
<feature type="active site" description="Proton donor" evidence="1">
    <location>
        <position position="203"/>
    </location>
</feature>
<feature type="binding site" evidence="1">
    <location>
        <position position="78"/>
    </location>
    <ligand>
        <name>substrate</name>
    </ligand>
</feature>
<feature type="binding site" evidence="1">
    <location>
        <position position="158"/>
    </location>
    <ligand>
        <name>substrate</name>
    </ligand>
</feature>
<feature type="binding site" evidence="1">
    <location>
        <begin position="179"/>
        <end position="180"/>
    </location>
    <ligand>
        <name>substrate</name>
    </ligand>
</feature>
<feature type="strand" evidence="2">
    <location>
        <begin position="3"/>
        <end position="9"/>
    </location>
</feature>
<feature type="helix" evidence="2">
    <location>
        <begin position="11"/>
        <end position="18"/>
    </location>
</feature>
<feature type="strand" evidence="2">
    <location>
        <begin position="21"/>
        <end position="28"/>
    </location>
</feature>
<feature type="strand" evidence="2">
    <location>
        <begin position="31"/>
        <end position="38"/>
    </location>
</feature>
<feature type="strand" evidence="2">
    <location>
        <begin position="41"/>
        <end position="47"/>
    </location>
</feature>
<feature type="helix" evidence="2">
    <location>
        <begin position="52"/>
        <end position="66"/>
    </location>
</feature>
<feature type="strand" evidence="2">
    <location>
        <begin position="69"/>
        <end position="79"/>
    </location>
</feature>
<feature type="strand" evidence="2">
    <location>
        <begin position="89"/>
        <end position="99"/>
    </location>
</feature>
<feature type="helix" evidence="2">
    <location>
        <begin position="103"/>
        <end position="105"/>
    </location>
</feature>
<feature type="strand" evidence="2">
    <location>
        <begin position="117"/>
        <end position="119"/>
    </location>
</feature>
<feature type="helix" evidence="2">
    <location>
        <begin position="123"/>
        <end position="132"/>
    </location>
</feature>
<feature type="strand" evidence="2">
    <location>
        <begin position="146"/>
        <end position="153"/>
    </location>
</feature>
<feature type="helix" evidence="2">
    <location>
        <begin position="161"/>
        <end position="170"/>
    </location>
</feature>
<feature type="strand" evidence="2">
    <location>
        <begin position="174"/>
        <end position="180"/>
    </location>
</feature>
<feature type="helix" evidence="2">
    <location>
        <begin position="181"/>
        <end position="190"/>
    </location>
</feature>
<feature type="strand" evidence="2">
    <location>
        <begin position="195"/>
        <end position="206"/>
    </location>
</feature>
<feature type="helix" evidence="2">
    <location>
        <begin position="209"/>
        <end position="234"/>
    </location>
</feature>
<feature type="turn" evidence="2">
    <location>
        <begin position="235"/>
        <end position="237"/>
    </location>
</feature>
<protein>
    <recommendedName>
        <fullName evidence="1">5'-methylthioadenosine/S-adenosylhomocysteine nucleosidase</fullName>
        <shortName evidence="1">MTA/SAH nucleosidase</shortName>
        <shortName evidence="1">MTAN</shortName>
        <ecNumber evidence="1">3.2.2.9</ecNumber>
    </recommendedName>
    <alternativeName>
        <fullName evidence="1">5'-deoxyadenosine nucleosidase</fullName>
        <shortName evidence="1">DOA nucleosidase</shortName>
        <shortName evidence="1">dAdo nucleosidase</shortName>
    </alternativeName>
    <alternativeName>
        <fullName evidence="1">5'-methylthioadenosine nucleosidase</fullName>
        <shortName evidence="1">MTA nucleosidase</shortName>
    </alternativeName>
    <alternativeName>
        <fullName evidence="1">S-adenosylhomocysteine nucleosidase</fullName>
        <shortName evidence="1">AdoHcy nucleosidase</shortName>
        <shortName evidence="1">SAH nucleosidase</shortName>
        <shortName evidence="1">SRH nucleosidase</shortName>
    </alternativeName>
</protein>
<dbReference type="EC" id="3.2.2.9" evidence="1"/>
<dbReference type="EMBL" id="CP000083">
    <property type="protein sequence ID" value="AAZ27614.1"/>
    <property type="molecule type" value="Genomic_DNA"/>
</dbReference>
<dbReference type="RefSeq" id="WP_011045468.1">
    <property type="nucleotide sequence ID" value="NC_003910.7"/>
</dbReference>
<dbReference type="PDB" id="5DK6">
    <property type="method" value="X-ray"/>
    <property type="resolution" value="2.27 A"/>
    <property type="chains" value="A=1-243"/>
</dbReference>
<dbReference type="PDBsum" id="5DK6"/>
<dbReference type="SMR" id="Q47UY5"/>
<dbReference type="STRING" id="167879.CPS_4743"/>
<dbReference type="KEGG" id="cps:CPS_4743"/>
<dbReference type="eggNOG" id="COG0775">
    <property type="taxonomic scope" value="Bacteria"/>
</dbReference>
<dbReference type="HOGENOM" id="CLU_031248_2_2_6"/>
<dbReference type="UniPathway" id="UPA00904">
    <property type="reaction ID" value="UER00871"/>
</dbReference>
<dbReference type="Proteomes" id="UP000000547">
    <property type="component" value="Chromosome"/>
</dbReference>
<dbReference type="GO" id="GO:0005829">
    <property type="term" value="C:cytosol"/>
    <property type="evidence" value="ECO:0007669"/>
    <property type="project" value="TreeGrafter"/>
</dbReference>
<dbReference type="GO" id="GO:0008782">
    <property type="term" value="F:adenosylhomocysteine nucleosidase activity"/>
    <property type="evidence" value="ECO:0007669"/>
    <property type="project" value="UniProtKB-UniRule"/>
</dbReference>
<dbReference type="GO" id="GO:0008930">
    <property type="term" value="F:methylthioadenosine nucleosidase activity"/>
    <property type="evidence" value="ECO:0007669"/>
    <property type="project" value="UniProtKB-UniRule"/>
</dbReference>
<dbReference type="GO" id="GO:0019509">
    <property type="term" value="P:L-methionine salvage from methylthioadenosine"/>
    <property type="evidence" value="ECO:0007669"/>
    <property type="project" value="UniProtKB-UniRule"/>
</dbReference>
<dbReference type="GO" id="GO:0019284">
    <property type="term" value="P:L-methionine salvage from S-adenosylmethionine"/>
    <property type="evidence" value="ECO:0007669"/>
    <property type="project" value="TreeGrafter"/>
</dbReference>
<dbReference type="GO" id="GO:0009164">
    <property type="term" value="P:nucleoside catabolic process"/>
    <property type="evidence" value="ECO:0007669"/>
    <property type="project" value="InterPro"/>
</dbReference>
<dbReference type="CDD" id="cd09008">
    <property type="entry name" value="MTAN"/>
    <property type="match status" value="1"/>
</dbReference>
<dbReference type="FunFam" id="3.40.50.1580:FF:000001">
    <property type="entry name" value="MTA/SAH nucleosidase family protein"/>
    <property type="match status" value="1"/>
</dbReference>
<dbReference type="Gene3D" id="3.40.50.1580">
    <property type="entry name" value="Nucleoside phosphorylase domain"/>
    <property type="match status" value="1"/>
</dbReference>
<dbReference type="HAMAP" id="MF_01684">
    <property type="entry name" value="Salvage_MtnN"/>
    <property type="match status" value="1"/>
</dbReference>
<dbReference type="InterPro" id="IPR010049">
    <property type="entry name" value="MTA_SAH_Nsdase"/>
</dbReference>
<dbReference type="InterPro" id="IPR000845">
    <property type="entry name" value="Nucleoside_phosphorylase_d"/>
</dbReference>
<dbReference type="InterPro" id="IPR035994">
    <property type="entry name" value="Nucleoside_phosphorylase_sf"/>
</dbReference>
<dbReference type="NCBIfam" id="TIGR01704">
    <property type="entry name" value="MTA_SAH-Nsdase"/>
    <property type="match status" value="1"/>
</dbReference>
<dbReference type="NCBIfam" id="NF004079">
    <property type="entry name" value="PRK05584.1"/>
    <property type="match status" value="1"/>
</dbReference>
<dbReference type="PANTHER" id="PTHR46832">
    <property type="entry name" value="5'-METHYLTHIOADENOSINE/S-ADENOSYLHOMOCYSTEINE NUCLEOSIDASE"/>
    <property type="match status" value="1"/>
</dbReference>
<dbReference type="PANTHER" id="PTHR46832:SF1">
    <property type="entry name" value="5'-METHYLTHIOADENOSINE_S-ADENOSYLHOMOCYSTEINE NUCLEOSIDASE"/>
    <property type="match status" value="1"/>
</dbReference>
<dbReference type="Pfam" id="PF01048">
    <property type="entry name" value="PNP_UDP_1"/>
    <property type="match status" value="1"/>
</dbReference>
<dbReference type="SUPFAM" id="SSF53167">
    <property type="entry name" value="Purine and uridine phosphorylases"/>
    <property type="match status" value="1"/>
</dbReference>
<sequence>MKAGIIGAMEPEVAILKEKLTDAKSTEHAGYTFHQGQLDGSDVVIVQSGIGKVAAALATAILIDRFQVDYVVNTGSAGGFDASLKVGDIVVSSEVRYHDVDLTAFGYEIGQLPANPAAFMPHDDLVAAAKKGIEQLSQTAGENIKAVTGLITTGDTFMTKEEDVAKARANFPTMAAVEMEGAAIAQACLQLKTPFVVIRSLSDIAGKESPHTFEEYLETAAVNSSQLVLNMLGQLKGKVLSAA</sequence>
<comment type="function">
    <text evidence="1">Catalyzes the irreversible cleavage of the glycosidic bond in both 5'-methylthioadenosine (MTA) and S-adenosylhomocysteine (SAH/AdoHcy) to adenine and the corresponding thioribose, 5'-methylthioribose and S-ribosylhomocysteine, respectively. Also cleaves 5'-deoxyadenosine, a toxic by-product of radical S-adenosylmethionine (SAM) enzymes, into 5-deoxyribose and adenine.</text>
</comment>
<comment type="catalytic activity">
    <reaction evidence="1">
        <text>S-adenosyl-L-homocysteine + H2O = S-(5-deoxy-D-ribos-5-yl)-L-homocysteine + adenine</text>
        <dbReference type="Rhea" id="RHEA:17805"/>
        <dbReference type="ChEBI" id="CHEBI:15377"/>
        <dbReference type="ChEBI" id="CHEBI:16708"/>
        <dbReference type="ChEBI" id="CHEBI:57856"/>
        <dbReference type="ChEBI" id="CHEBI:58195"/>
        <dbReference type="EC" id="3.2.2.9"/>
    </reaction>
</comment>
<comment type="catalytic activity">
    <reaction evidence="1">
        <text>S-methyl-5'-thioadenosine + H2O = 5-(methylsulfanyl)-D-ribose + adenine</text>
        <dbReference type="Rhea" id="RHEA:13617"/>
        <dbReference type="ChEBI" id="CHEBI:15377"/>
        <dbReference type="ChEBI" id="CHEBI:16708"/>
        <dbReference type="ChEBI" id="CHEBI:17509"/>
        <dbReference type="ChEBI" id="CHEBI:78440"/>
        <dbReference type="EC" id="3.2.2.9"/>
    </reaction>
</comment>
<comment type="catalytic activity">
    <reaction evidence="1">
        <text>5'-deoxyadenosine + H2O = 5-deoxy-D-ribose + adenine</text>
        <dbReference type="Rhea" id="RHEA:29859"/>
        <dbReference type="ChEBI" id="CHEBI:15377"/>
        <dbReference type="ChEBI" id="CHEBI:16708"/>
        <dbReference type="ChEBI" id="CHEBI:17319"/>
        <dbReference type="ChEBI" id="CHEBI:149540"/>
        <dbReference type="EC" id="3.2.2.9"/>
    </reaction>
    <physiologicalReaction direction="left-to-right" evidence="1">
        <dbReference type="Rhea" id="RHEA:29860"/>
    </physiologicalReaction>
</comment>
<comment type="pathway">
    <text evidence="1">Amino-acid biosynthesis; L-methionine biosynthesis via salvage pathway; S-methyl-5-thio-alpha-D-ribose 1-phosphate from S-methyl-5'-thioadenosine (hydrolase route): step 1/2.</text>
</comment>
<comment type="similarity">
    <text evidence="1">Belongs to the PNP/UDP phosphorylase family. MtnN subfamily.</text>
</comment>
<organism>
    <name type="scientific">Colwellia psychrerythraea (strain 34H / ATCC BAA-681)</name>
    <name type="common">Vibrio psychroerythus</name>
    <dbReference type="NCBI Taxonomy" id="167879"/>
    <lineage>
        <taxon>Bacteria</taxon>
        <taxon>Pseudomonadati</taxon>
        <taxon>Pseudomonadota</taxon>
        <taxon>Gammaproteobacteria</taxon>
        <taxon>Alteromonadales</taxon>
        <taxon>Colwelliaceae</taxon>
        <taxon>Colwellia</taxon>
    </lineage>
</organism>
<accession>Q47UY5</accession>
<evidence type="ECO:0000255" key="1">
    <source>
        <dbReference type="HAMAP-Rule" id="MF_01684"/>
    </source>
</evidence>
<evidence type="ECO:0007829" key="2">
    <source>
        <dbReference type="PDB" id="5DK6"/>
    </source>
</evidence>
<proteinExistence type="evidence at protein level"/>
<reference key="1">
    <citation type="journal article" date="2005" name="Proc. Natl. Acad. Sci. U.S.A.">
        <title>The psychrophilic lifestyle as revealed by the genome sequence of Colwellia psychrerythraea 34H through genomic and proteomic analyses.</title>
        <authorList>
            <person name="Methe B.A."/>
            <person name="Nelson K.E."/>
            <person name="Deming J.W."/>
            <person name="Momen B."/>
            <person name="Melamud E."/>
            <person name="Zhang X."/>
            <person name="Moult J."/>
            <person name="Madupu R."/>
            <person name="Nelson W.C."/>
            <person name="Dodson R.J."/>
            <person name="Brinkac L.M."/>
            <person name="Daugherty S.C."/>
            <person name="Durkin A.S."/>
            <person name="DeBoy R.T."/>
            <person name="Kolonay J.F."/>
            <person name="Sullivan S.A."/>
            <person name="Zhou L."/>
            <person name="Davidsen T.M."/>
            <person name="Wu M."/>
            <person name="Huston A.L."/>
            <person name="Lewis M."/>
            <person name="Weaver B."/>
            <person name="Weidman J.F."/>
            <person name="Khouri H."/>
            <person name="Utterback T.R."/>
            <person name="Feldblyum T.V."/>
            <person name="Fraser C.M."/>
        </authorList>
    </citation>
    <scope>NUCLEOTIDE SEQUENCE [LARGE SCALE GENOMIC DNA]</scope>
    <source>
        <strain>34H / ATCC BAA-681</strain>
    </source>
</reference>